<evidence type="ECO:0000255" key="1">
    <source>
        <dbReference type="HAMAP-Rule" id="MF_00394"/>
    </source>
</evidence>
<proteinExistence type="inferred from homology"/>
<organism>
    <name type="scientific">Aster yellows witches'-broom phytoplasma (strain AYWB)</name>
    <dbReference type="NCBI Taxonomy" id="322098"/>
    <lineage>
        <taxon>Bacteria</taxon>
        <taxon>Bacillati</taxon>
        <taxon>Mycoplasmatota</taxon>
        <taxon>Mollicutes</taxon>
        <taxon>Acholeplasmatales</taxon>
        <taxon>Acholeplasmataceae</taxon>
        <taxon>Candidatus Phytoplasma</taxon>
        <taxon>16SrI (Aster yellows group)</taxon>
    </lineage>
</organism>
<keyword id="KW-0963">Cytoplasm</keyword>
<keyword id="KW-0444">Lipid biosynthesis</keyword>
<keyword id="KW-0443">Lipid metabolism</keyword>
<keyword id="KW-0520">NAD</keyword>
<keyword id="KW-0521">NADP</keyword>
<keyword id="KW-0547">Nucleotide-binding</keyword>
<keyword id="KW-0560">Oxidoreductase</keyword>
<keyword id="KW-0594">Phospholipid biosynthesis</keyword>
<keyword id="KW-1208">Phospholipid metabolism</keyword>
<feature type="chain" id="PRO_0000255280" description="Glycerol-3-phosphate dehydrogenase [NAD(P)+]">
    <location>
        <begin position="1"/>
        <end position="338"/>
    </location>
</feature>
<feature type="active site" description="Proton acceptor" evidence="1">
    <location>
        <position position="197"/>
    </location>
</feature>
<feature type="binding site" evidence="1">
    <location>
        <position position="20"/>
    </location>
    <ligand>
        <name>NADPH</name>
        <dbReference type="ChEBI" id="CHEBI:57783"/>
    </ligand>
</feature>
<feature type="binding site" evidence="1">
    <location>
        <position position="110"/>
    </location>
    <ligand>
        <name>NADPH</name>
        <dbReference type="ChEBI" id="CHEBI:57783"/>
    </ligand>
</feature>
<feature type="binding site" evidence="1">
    <location>
        <position position="110"/>
    </location>
    <ligand>
        <name>sn-glycerol 3-phosphate</name>
        <dbReference type="ChEBI" id="CHEBI:57597"/>
    </ligand>
</feature>
<feature type="binding site" evidence="1">
    <location>
        <position position="141"/>
    </location>
    <ligand>
        <name>sn-glycerol 3-phosphate</name>
        <dbReference type="ChEBI" id="CHEBI:57597"/>
    </ligand>
</feature>
<feature type="binding site" evidence="1">
    <location>
        <position position="143"/>
    </location>
    <ligand>
        <name>sn-glycerol 3-phosphate</name>
        <dbReference type="ChEBI" id="CHEBI:57597"/>
    </ligand>
</feature>
<feature type="binding site" evidence="1">
    <location>
        <position position="145"/>
    </location>
    <ligand>
        <name>NADPH</name>
        <dbReference type="ChEBI" id="CHEBI:57783"/>
    </ligand>
</feature>
<feature type="binding site" evidence="1">
    <location>
        <position position="197"/>
    </location>
    <ligand>
        <name>sn-glycerol 3-phosphate</name>
        <dbReference type="ChEBI" id="CHEBI:57597"/>
    </ligand>
</feature>
<feature type="binding site" evidence="1">
    <location>
        <position position="250"/>
    </location>
    <ligand>
        <name>sn-glycerol 3-phosphate</name>
        <dbReference type="ChEBI" id="CHEBI:57597"/>
    </ligand>
</feature>
<feature type="binding site" evidence="1">
    <location>
        <position position="260"/>
    </location>
    <ligand>
        <name>sn-glycerol 3-phosphate</name>
        <dbReference type="ChEBI" id="CHEBI:57597"/>
    </ligand>
</feature>
<feature type="binding site" evidence="1">
    <location>
        <position position="261"/>
    </location>
    <ligand>
        <name>NADPH</name>
        <dbReference type="ChEBI" id="CHEBI:57783"/>
    </ligand>
</feature>
<feature type="binding site" evidence="1">
    <location>
        <position position="261"/>
    </location>
    <ligand>
        <name>sn-glycerol 3-phosphate</name>
        <dbReference type="ChEBI" id="CHEBI:57597"/>
    </ligand>
</feature>
<feature type="binding site" evidence="1">
    <location>
        <position position="262"/>
    </location>
    <ligand>
        <name>sn-glycerol 3-phosphate</name>
        <dbReference type="ChEBI" id="CHEBI:57597"/>
    </ligand>
</feature>
<feature type="binding site" evidence="1">
    <location>
        <position position="287"/>
    </location>
    <ligand>
        <name>NADPH</name>
        <dbReference type="ChEBI" id="CHEBI:57783"/>
    </ligand>
</feature>
<reference key="1">
    <citation type="journal article" date="2006" name="J. Bacteriol.">
        <title>Living with genome instability: the adaptation of phytoplasmas to diverse environments of their insect and plant hosts.</title>
        <authorList>
            <person name="Bai X."/>
            <person name="Zhang J."/>
            <person name="Ewing A."/>
            <person name="Miller S.A."/>
            <person name="Jancso Radek A."/>
            <person name="Shevchenko D.V."/>
            <person name="Tsukerman K."/>
            <person name="Walunas T."/>
            <person name="Lapidus A."/>
            <person name="Campbell J.W."/>
            <person name="Hogenhout S.A."/>
        </authorList>
    </citation>
    <scope>NUCLEOTIDE SEQUENCE [LARGE SCALE GENOMIC DNA]</scope>
    <source>
        <strain>AYWB</strain>
    </source>
</reference>
<gene>
    <name evidence="1" type="primary">gpsA</name>
    <name type="ordered locus">AYWB_480</name>
</gene>
<accession>Q2NIZ6</accession>
<comment type="function">
    <text evidence="1">Catalyzes the reduction of the glycolytic intermediate dihydroxyacetone phosphate (DHAP) to sn-glycerol 3-phosphate (G3P), the key precursor for phospholipid synthesis.</text>
</comment>
<comment type="catalytic activity">
    <reaction evidence="1">
        <text>sn-glycerol 3-phosphate + NAD(+) = dihydroxyacetone phosphate + NADH + H(+)</text>
        <dbReference type="Rhea" id="RHEA:11092"/>
        <dbReference type="ChEBI" id="CHEBI:15378"/>
        <dbReference type="ChEBI" id="CHEBI:57540"/>
        <dbReference type="ChEBI" id="CHEBI:57597"/>
        <dbReference type="ChEBI" id="CHEBI:57642"/>
        <dbReference type="ChEBI" id="CHEBI:57945"/>
        <dbReference type="EC" id="1.1.1.94"/>
    </reaction>
    <physiologicalReaction direction="right-to-left" evidence="1">
        <dbReference type="Rhea" id="RHEA:11094"/>
    </physiologicalReaction>
</comment>
<comment type="catalytic activity">
    <reaction evidence="1">
        <text>sn-glycerol 3-phosphate + NADP(+) = dihydroxyacetone phosphate + NADPH + H(+)</text>
        <dbReference type="Rhea" id="RHEA:11096"/>
        <dbReference type="ChEBI" id="CHEBI:15378"/>
        <dbReference type="ChEBI" id="CHEBI:57597"/>
        <dbReference type="ChEBI" id="CHEBI:57642"/>
        <dbReference type="ChEBI" id="CHEBI:57783"/>
        <dbReference type="ChEBI" id="CHEBI:58349"/>
        <dbReference type="EC" id="1.1.1.94"/>
    </reaction>
    <physiologicalReaction direction="right-to-left" evidence="1">
        <dbReference type="Rhea" id="RHEA:11098"/>
    </physiologicalReaction>
</comment>
<comment type="pathway">
    <text evidence="1">Membrane lipid metabolism; glycerophospholipid metabolism.</text>
</comment>
<comment type="subcellular location">
    <subcellularLocation>
        <location evidence="1">Cytoplasm</location>
    </subcellularLocation>
</comment>
<comment type="similarity">
    <text evidence="1">Belongs to the NAD-dependent glycerol-3-phosphate dehydrogenase family.</text>
</comment>
<dbReference type="EC" id="1.1.1.94" evidence="1"/>
<dbReference type="EMBL" id="CP000061">
    <property type="protein sequence ID" value="ABC65597.1"/>
    <property type="molecule type" value="Genomic_DNA"/>
</dbReference>
<dbReference type="SMR" id="Q2NIZ6"/>
<dbReference type="STRING" id="322098.AYWB_480"/>
<dbReference type="KEGG" id="ayw:AYWB_480"/>
<dbReference type="eggNOG" id="COG0240">
    <property type="taxonomic scope" value="Bacteria"/>
</dbReference>
<dbReference type="HOGENOM" id="CLU_033449_0_2_14"/>
<dbReference type="PhylomeDB" id="Q2NIZ6"/>
<dbReference type="UniPathway" id="UPA00940"/>
<dbReference type="Proteomes" id="UP000001934">
    <property type="component" value="Chromosome"/>
</dbReference>
<dbReference type="GO" id="GO:0005829">
    <property type="term" value="C:cytosol"/>
    <property type="evidence" value="ECO:0007669"/>
    <property type="project" value="TreeGrafter"/>
</dbReference>
<dbReference type="GO" id="GO:0047952">
    <property type="term" value="F:glycerol-3-phosphate dehydrogenase [NAD(P)+] activity"/>
    <property type="evidence" value="ECO:0007669"/>
    <property type="project" value="UniProtKB-UniRule"/>
</dbReference>
<dbReference type="GO" id="GO:0051287">
    <property type="term" value="F:NAD binding"/>
    <property type="evidence" value="ECO:0007669"/>
    <property type="project" value="InterPro"/>
</dbReference>
<dbReference type="GO" id="GO:0005975">
    <property type="term" value="P:carbohydrate metabolic process"/>
    <property type="evidence" value="ECO:0007669"/>
    <property type="project" value="InterPro"/>
</dbReference>
<dbReference type="GO" id="GO:0046167">
    <property type="term" value="P:glycerol-3-phosphate biosynthetic process"/>
    <property type="evidence" value="ECO:0007669"/>
    <property type="project" value="UniProtKB-UniRule"/>
</dbReference>
<dbReference type="GO" id="GO:0046168">
    <property type="term" value="P:glycerol-3-phosphate catabolic process"/>
    <property type="evidence" value="ECO:0007669"/>
    <property type="project" value="InterPro"/>
</dbReference>
<dbReference type="GO" id="GO:0006650">
    <property type="term" value="P:glycerophospholipid metabolic process"/>
    <property type="evidence" value="ECO:0007669"/>
    <property type="project" value="UniProtKB-UniRule"/>
</dbReference>
<dbReference type="GO" id="GO:0008654">
    <property type="term" value="P:phospholipid biosynthetic process"/>
    <property type="evidence" value="ECO:0007669"/>
    <property type="project" value="UniProtKB-KW"/>
</dbReference>
<dbReference type="Gene3D" id="1.10.1040.10">
    <property type="entry name" value="N-(1-d-carboxylethyl)-l-norvaline Dehydrogenase, domain 2"/>
    <property type="match status" value="1"/>
</dbReference>
<dbReference type="Gene3D" id="3.40.50.720">
    <property type="entry name" value="NAD(P)-binding Rossmann-like Domain"/>
    <property type="match status" value="1"/>
</dbReference>
<dbReference type="HAMAP" id="MF_00394">
    <property type="entry name" value="NAD_Glyc3P_dehydrog"/>
    <property type="match status" value="1"/>
</dbReference>
<dbReference type="InterPro" id="IPR008927">
    <property type="entry name" value="6-PGluconate_DH-like_C_sf"/>
</dbReference>
<dbReference type="InterPro" id="IPR013328">
    <property type="entry name" value="6PGD_dom2"/>
</dbReference>
<dbReference type="InterPro" id="IPR006168">
    <property type="entry name" value="G3P_DH_NAD-dep"/>
</dbReference>
<dbReference type="InterPro" id="IPR006109">
    <property type="entry name" value="G3P_DH_NAD-dep_C"/>
</dbReference>
<dbReference type="InterPro" id="IPR011128">
    <property type="entry name" value="G3P_DH_NAD-dep_N"/>
</dbReference>
<dbReference type="InterPro" id="IPR036291">
    <property type="entry name" value="NAD(P)-bd_dom_sf"/>
</dbReference>
<dbReference type="NCBIfam" id="NF000940">
    <property type="entry name" value="PRK00094.1-2"/>
    <property type="match status" value="1"/>
</dbReference>
<dbReference type="NCBIfam" id="NF000942">
    <property type="entry name" value="PRK00094.1-4"/>
    <property type="match status" value="1"/>
</dbReference>
<dbReference type="PANTHER" id="PTHR11728">
    <property type="entry name" value="GLYCEROL-3-PHOSPHATE DEHYDROGENASE"/>
    <property type="match status" value="1"/>
</dbReference>
<dbReference type="PANTHER" id="PTHR11728:SF1">
    <property type="entry name" value="GLYCEROL-3-PHOSPHATE DEHYDROGENASE [NAD(+)] 2, CHLOROPLASTIC"/>
    <property type="match status" value="1"/>
</dbReference>
<dbReference type="Pfam" id="PF07479">
    <property type="entry name" value="NAD_Gly3P_dh_C"/>
    <property type="match status" value="1"/>
</dbReference>
<dbReference type="Pfam" id="PF01210">
    <property type="entry name" value="NAD_Gly3P_dh_N"/>
    <property type="match status" value="1"/>
</dbReference>
<dbReference type="PIRSF" id="PIRSF000114">
    <property type="entry name" value="Glycerol-3-P_dh"/>
    <property type="match status" value="1"/>
</dbReference>
<dbReference type="PRINTS" id="PR00077">
    <property type="entry name" value="GPDHDRGNASE"/>
</dbReference>
<dbReference type="SUPFAM" id="SSF48179">
    <property type="entry name" value="6-phosphogluconate dehydrogenase C-terminal domain-like"/>
    <property type="match status" value="1"/>
</dbReference>
<dbReference type="SUPFAM" id="SSF51735">
    <property type="entry name" value="NAD(P)-binding Rossmann-fold domains"/>
    <property type="match status" value="1"/>
</dbReference>
<dbReference type="PROSITE" id="PS00957">
    <property type="entry name" value="NAD_G3PDH"/>
    <property type="match status" value="1"/>
</dbReference>
<protein>
    <recommendedName>
        <fullName evidence="1">Glycerol-3-phosphate dehydrogenase [NAD(P)+]</fullName>
        <ecNumber evidence="1">1.1.1.94</ecNumber>
    </recommendedName>
    <alternativeName>
        <fullName evidence="1">NAD(P)(+)-dependent glycerol-3-phosphate dehydrogenase</fullName>
    </alternativeName>
    <alternativeName>
        <fullName evidence="1">NAD(P)H-dependent dihydroxyacetone-phosphate reductase</fullName>
    </alternativeName>
</protein>
<sequence length="338" mass="37578">MIKRKKLYFMKITIIGSGAWGSTLAQVLTDNNNQVLLYDTNLSYVEKINQGKHPIFNTPLLNVKAVSCLKQTLEYSDLIVLAVPMKFMRHLLKKITLMLTNPKSFVNVSKGIEPLTFLRVSEIVKQVIPAPLLANFASLMGPSHAEEVILRKLTLLTAASSNPVFSLEIQKLFSCPNYLKVYTSSDLVGNEICSAFKNILALINGILVAKDFGINSQAALMSRGILEMSRLVTFYQGNPQTVLGLPGLGDLIVTAFSKYSRNFNAGAKIAAGIPYQQIIDSSLQTVEGFQTLNAFYQLQLKHNLDLPIIQASYQLIFESKPFDTVFATLIQRPYKSEF</sequence>
<name>GPDA_AYWBP</name>